<feature type="chain" id="PRO_0000244435" description="tRNA endonuclease VMS1">
    <location>
        <begin position="1"/>
        <end position="632"/>
    </location>
</feature>
<feature type="domain" description="VLRF1" evidence="2">
    <location>
        <begin position="232"/>
        <end position="392"/>
    </location>
</feature>
<feature type="repeat" description="ANK 1">
    <location>
        <begin position="470"/>
        <end position="500"/>
    </location>
</feature>
<feature type="repeat" description="ANK 2">
    <location>
        <begin position="504"/>
        <end position="530"/>
    </location>
</feature>
<feature type="zinc finger region" description="C2H2-type">
    <location>
        <begin position="72"/>
        <end position="96"/>
    </location>
</feature>
<feature type="region of interest" description="Disordered" evidence="3">
    <location>
        <begin position="123"/>
        <end position="155"/>
    </location>
</feature>
<feature type="region of interest" description="Disordered" evidence="3">
    <location>
        <begin position="578"/>
        <end position="632"/>
    </location>
</feature>
<feature type="coiled-coil region" evidence="1">
    <location>
        <begin position="544"/>
        <end position="582"/>
    </location>
</feature>
<feature type="coiled-coil region" evidence="1">
    <location>
        <begin position="608"/>
        <end position="632"/>
    </location>
</feature>
<feature type="compositionally biased region" description="Basic and acidic residues" evidence="3">
    <location>
        <begin position="578"/>
        <end position="589"/>
    </location>
</feature>
<feature type="compositionally biased region" description="Polar residues" evidence="3">
    <location>
        <begin position="595"/>
        <end position="608"/>
    </location>
</feature>
<feature type="compositionally biased region" description="Basic and acidic residues" evidence="3">
    <location>
        <begin position="609"/>
        <end position="632"/>
    </location>
</feature>
<feature type="active site" evidence="2 14 15">
    <location>
        <position position="295"/>
    </location>
</feature>
<feature type="mutagenesis site" description="Abolished ability to release incompletely synthesized polypeptides from 60S ribosomal subunit." evidence="8">
    <original>DYHLMNVKR</original>
    <variation>AYHLMAVAA</variation>
    <location>
        <begin position="94"/>
        <end position="102"/>
    </location>
</feature>
<feature type="mutagenesis site" description="Does not affect ability to release incompletely synthesized polypeptides from 60S ribosomal subunit." evidence="9">
    <original>H</original>
    <variation>A</variation>
    <location>
        <position position="279"/>
    </location>
</feature>
<feature type="mutagenesis site" description="Does not affect ability to release incompletely synthesized polypeptides from 60S ribosomal subunit." evidence="9">
    <original>H</original>
    <variation>A</variation>
    <location>
        <position position="283"/>
    </location>
</feature>
<feature type="mutagenesis site" description="Does not affect ability to release incompletely synthesized polypeptides from 60S ribosomal subunit." evidence="9">
    <original>R</original>
    <variation>A</variation>
    <location>
        <position position="284"/>
    </location>
</feature>
<feature type="mutagenesis site" description="Reduced ability to release incompletely synthesized polypeptides from 60S ribosomal subunit." evidence="9 11">
    <original>Y</original>
    <variation>A</variation>
    <location>
        <position position="285"/>
    </location>
</feature>
<feature type="mutagenesis site" description="Does not affect ability to release incompletely synthesized polypeptides from 60S ribosomal subunit." evidence="9">
    <original>T</original>
    <variation>A</variation>
    <location>
        <position position="286"/>
    </location>
</feature>
<feature type="mutagenesis site" description="Abolished ability to release incompletely synthesized polypeptides from 60S ribosomal subunit." evidence="9 10">
    <original>R</original>
    <variation>A</variation>
    <location>
        <position position="288"/>
    </location>
</feature>
<feature type="mutagenesis site" description="Abolished ability to release incompletely synthesized polypeptides from 60S ribosomal subunit." evidence="9">
    <original>G</original>
    <variation>A</variation>
    <location>
        <position position="292"/>
    </location>
</feature>
<feature type="mutagenesis site" description="Abolished ability to release incompletely synthesized polypeptides from 60S ribosomal subunit." evidence="9">
    <location>
        <position position="294"/>
    </location>
</feature>
<feature type="mutagenesis site" description="Abolished ability to cleave polypeptidyl-tRNAs to release incompletely synthesized polypeptides from 60S ribosomal subunit." evidence="8 9 11">
    <original>Q</original>
    <variation>A</variation>
    <variation>P</variation>
    <variation>L</variation>
    <location>
        <position position="295"/>
    </location>
</feature>
<feature type="mutagenesis site" description="Abolished ability to release incompletely synthesized polypeptides from 60S ribosomal subunit." evidence="8">
    <original>RR</original>
    <variation>AA</variation>
    <location>
        <begin position="313"/>
        <end position="314"/>
    </location>
</feature>
<feature type="sequence conflict" description="In Ref. 3; AAU09687." evidence="13" ref="3">
    <original>K</original>
    <variation>E</variation>
    <location>
        <position position="170"/>
    </location>
</feature>
<feature type="helix" evidence="19">
    <location>
        <begin position="15"/>
        <end position="18"/>
    </location>
</feature>
<feature type="helix" evidence="19">
    <location>
        <begin position="25"/>
        <end position="30"/>
    </location>
</feature>
<feature type="turn" evidence="19">
    <location>
        <begin position="75"/>
        <end position="78"/>
    </location>
</feature>
<feature type="helix" evidence="19">
    <location>
        <begin position="94"/>
        <end position="104"/>
    </location>
</feature>
<feature type="strand" evidence="19">
    <location>
        <begin position="190"/>
        <end position="194"/>
    </location>
</feature>
<feature type="strand" evidence="19">
    <location>
        <begin position="204"/>
        <end position="207"/>
    </location>
</feature>
<feature type="helix" evidence="19">
    <location>
        <begin position="208"/>
        <end position="210"/>
    </location>
</feature>
<feature type="helix" evidence="19">
    <location>
        <begin position="219"/>
        <end position="226"/>
    </location>
</feature>
<feature type="strand" evidence="19">
    <location>
        <begin position="235"/>
        <end position="242"/>
    </location>
</feature>
<feature type="strand" evidence="19">
    <location>
        <begin position="245"/>
        <end position="254"/>
    </location>
</feature>
<feature type="helix" evidence="19">
    <location>
        <begin position="269"/>
        <end position="272"/>
    </location>
</feature>
<feature type="strand" evidence="19">
    <location>
        <begin position="275"/>
        <end position="283"/>
    </location>
</feature>
<feature type="helix" evidence="19">
    <location>
        <begin position="320"/>
        <end position="330"/>
    </location>
</feature>
<feature type="helix" evidence="19">
    <location>
        <begin position="332"/>
        <end position="336"/>
    </location>
</feature>
<feature type="strand" evidence="19">
    <location>
        <begin position="341"/>
        <end position="344"/>
    </location>
</feature>
<feature type="helix" evidence="19">
    <location>
        <begin position="348"/>
        <end position="351"/>
    </location>
</feature>
<feature type="helix" evidence="19">
    <location>
        <begin position="352"/>
        <end position="354"/>
    </location>
</feature>
<feature type="turn" evidence="19">
    <location>
        <begin position="355"/>
        <end position="357"/>
    </location>
</feature>
<feature type="strand" evidence="19">
    <location>
        <begin position="358"/>
        <end position="360"/>
    </location>
</feature>
<feature type="helix" evidence="19">
    <location>
        <begin position="379"/>
        <end position="390"/>
    </location>
</feature>
<reference key="1">
    <citation type="journal article" date="1997" name="Nature">
        <title>The nucleotide sequence of Saccharomyces cerevisiae chromosome IV.</title>
        <authorList>
            <person name="Jacq C."/>
            <person name="Alt-Moerbe J."/>
            <person name="Andre B."/>
            <person name="Arnold W."/>
            <person name="Bahr A."/>
            <person name="Ballesta J.P.G."/>
            <person name="Bargues M."/>
            <person name="Baron L."/>
            <person name="Becker A."/>
            <person name="Biteau N."/>
            <person name="Bloecker H."/>
            <person name="Blugeon C."/>
            <person name="Boskovic J."/>
            <person name="Brandt P."/>
            <person name="Brueckner M."/>
            <person name="Buitrago M.J."/>
            <person name="Coster F."/>
            <person name="Delaveau T."/>
            <person name="del Rey F."/>
            <person name="Dujon B."/>
            <person name="Eide L.G."/>
            <person name="Garcia-Cantalejo J.M."/>
            <person name="Goffeau A."/>
            <person name="Gomez-Peris A."/>
            <person name="Granotier C."/>
            <person name="Hanemann V."/>
            <person name="Hankeln T."/>
            <person name="Hoheisel J.D."/>
            <person name="Jaeger W."/>
            <person name="Jimenez A."/>
            <person name="Jonniaux J.-L."/>
            <person name="Kraemer C."/>
            <person name="Kuester H."/>
            <person name="Laamanen P."/>
            <person name="Legros Y."/>
            <person name="Louis E.J."/>
            <person name="Moeller-Rieker S."/>
            <person name="Monnet A."/>
            <person name="Moro M."/>
            <person name="Mueller-Auer S."/>
            <person name="Nussbaumer B."/>
            <person name="Paricio N."/>
            <person name="Paulin L."/>
            <person name="Perea J."/>
            <person name="Perez-Alonso M."/>
            <person name="Perez-Ortin J.E."/>
            <person name="Pohl T.M."/>
            <person name="Prydz H."/>
            <person name="Purnelle B."/>
            <person name="Rasmussen S.W."/>
            <person name="Remacha M.A."/>
            <person name="Revuelta J.L."/>
            <person name="Rieger M."/>
            <person name="Salom D."/>
            <person name="Saluz H.P."/>
            <person name="Saiz J.E."/>
            <person name="Saren A.-M."/>
            <person name="Schaefer M."/>
            <person name="Scharfe M."/>
            <person name="Schmidt E.R."/>
            <person name="Schneider C."/>
            <person name="Scholler P."/>
            <person name="Schwarz S."/>
            <person name="Soler-Mira A."/>
            <person name="Urrestarazu L.A."/>
            <person name="Verhasselt P."/>
            <person name="Vissers S."/>
            <person name="Voet M."/>
            <person name="Volckaert G."/>
            <person name="Wagner G."/>
            <person name="Wambutt R."/>
            <person name="Wedler E."/>
            <person name="Wedler H."/>
            <person name="Woelfl S."/>
            <person name="Harris D.E."/>
            <person name="Bowman S."/>
            <person name="Brown D."/>
            <person name="Churcher C.M."/>
            <person name="Connor R."/>
            <person name="Dedman K."/>
            <person name="Gentles S."/>
            <person name="Hamlin N."/>
            <person name="Hunt S."/>
            <person name="Jones L."/>
            <person name="McDonald S."/>
            <person name="Murphy L.D."/>
            <person name="Niblett D."/>
            <person name="Odell C."/>
            <person name="Oliver K."/>
            <person name="Rajandream M.A."/>
            <person name="Richards C."/>
            <person name="Shore L."/>
            <person name="Walsh S.V."/>
            <person name="Barrell B.G."/>
            <person name="Dietrich F.S."/>
            <person name="Mulligan J.T."/>
            <person name="Allen E."/>
            <person name="Araujo R."/>
            <person name="Aviles E."/>
            <person name="Berno A."/>
            <person name="Carpenter J."/>
            <person name="Chen E."/>
            <person name="Cherry J.M."/>
            <person name="Chung E."/>
            <person name="Duncan M."/>
            <person name="Hunicke-Smith S."/>
            <person name="Hyman R.W."/>
            <person name="Komp C."/>
            <person name="Lashkari D."/>
            <person name="Lew H."/>
            <person name="Lin D."/>
            <person name="Mosedale D."/>
            <person name="Nakahara K."/>
            <person name="Namath A."/>
            <person name="Oefner P."/>
            <person name="Oh C."/>
            <person name="Petel F.X."/>
            <person name="Roberts D."/>
            <person name="Schramm S."/>
            <person name="Schroeder M."/>
            <person name="Shogren T."/>
            <person name="Shroff N."/>
            <person name="Winant A."/>
            <person name="Yelton M.A."/>
            <person name="Botstein D."/>
            <person name="Davis R.W."/>
            <person name="Johnston M."/>
            <person name="Andrews S."/>
            <person name="Brinkman R."/>
            <person name="Cooper J."/>
            <person name="Ding H."/>
            <person name="Du Z."/>
            <person name="Favello A."/>
            <person name="Fulton L."/>
            <person name="Gattung S."/>
            <person name="Greco T."/>
            <person name="Hallsworth K."/>
            <person name="Hawkins J."/>
            <person name="Hillier L.W."/>
            <person name="Jier M."/>
            <person name="Johnson D."/>
            <person name="Johnston L."/>
            <person name="Kirsten J."/>
            <person name="Kucaba T."/>
            <person name="Langston Y."/>
            <person name="Latreille P."/>
            <person name="Le T."/>
            <person name="Mardis E."/>
            <person name="Menezes S."/>
            <person name="Miller N."/>
            <person name="Nhan M."/>
            <person name="Pauley A."/>
            <person name="Peluso D."/>
            <person name="Rifkin L."/>
            <person name="Riles L."/>
            <person name="Taich A."/>
            <person name="Trevaskis E."/>
            <person name="Vignati D."/>
            <person name="Wilcox L."/>
            <person name="Wohldman P."/>
            <person name="Vaudin M."/>
            <person name="Wilson R."/>
            <person name="Waterston R."/>
            <person name="Albermann K."/>
            <person name="Hani J."/>
            <person name="Heumann K."/>
            <person name="Kleine K."/>
            <person name="Mewes H.-W."/>
            <person name="Zollner A."/>
            <person name="Zaccaria P."/>
        </authorList>
    </citation>
    <scope>NUCLEOTIDE SEQUENCE [LARGE SCALE GENOMIC DNA]</scope>
    <source>
        <strain>ATCC 204508 / S288c</strain>
    </source>
</reference>
<reference key="2">
    <citation type="journal article" date="2014" name="G3 (Bethesda)">
        <title>The reference genome sequence of Saccharomyces cerevisiae: Then and now.</title>
        <authorList>
            <person name="Engel S.R."/>
            <person name="Dietrich F.S."/>
            <person name="Fisk D.G."/>
            <person name="Binkley G."/>
            <person name="Balakrishnan R."/>
            <person name="Costanzo M.C."/>
            <person name="Dwight S.S."/>
            <person name="Hitz B.C."/>
            <person name="Karra K."/>
            <person name="Nash R.S."/>
            <person name="Weng S."/>
            <person name="Wong E.D."/>
            <person name="Lloyd P."/>
            <person name="Skrzypek M.S."/>
            <person name="Miyasato S.R."/>
            <person name="Simison M."/>
            <person name="Cherry J.M."/>
        </authorList>
    </citation>
    <scope>GENOME REANNOTATION</scope>
    <source>
        <strain>ATCC 204508 / S288c</strain>
    </source>
</reference>
<reference key="3">
    <citation type="journal article" date="2007" name="Genome Res.">
        <title>Approaching a complete repository of sequence-verified protein-encoding clones for Saccharomyces cerevisiae.</title>
        <authorList>
            <person name="Hu Y."/>
            <person name="Rolfs A."/>
            <person name="Bhullar B."/>
            <person name="Murthy T.V.S."/>
            <person name="Zhu C."/>
            <person name="Berger M.F."/>
            <person name="Camargo A.A."/>
            <person name="Kelley F."/>
            <person name="McCarron S."/>
            <person name="Jepson D."/>
            <person name="Richardson A."/>
            <person name="Raphael J."/>
            <person name="Moreira D."/>
            <person name="Taycher E."/>
            <person name="Zuo D."/>
            <person name="Mohr S."/>
            <person name="Kane M.F."/>
            <person name="Williamson J."/>
            <person name="Simpson A.J.G."/>
            <person name="Bulyk M.L."/>
            <person name="Harlow E."/>
            <person name="Marsischky G."/>
            <person name="Kolodner R.D."/>
            <person name="LaBaer J."/>
        </authorList>
    </citation>
    <scope>NUCLEOTIDE SEQUENCE [GENOMIC DNA]</scope>
    <source>
        <strain>ATCC 204508 / S288c</strain>
    </source>
</reference>
<reference key="4">
    <citation type="journal article" date="1997" name="Nucleic Acids Res.">
        <title>Variations of the C2H2 zinc finger motif in the yeast genome and classification of yeast zinc finger proteins.</title>
        <authorList>
            <person name="Boehm S."/>
            <person name="Frishman D."/>
            <person name="Mewes H.-W."/>
        </authorList>
    </citation>
    <scope>DOMAIN</scope>
</reference>
<reference key="5">
    <citation type="journal article" date="2003" name="Nature">
        <title>Global analysis of protein localization in budding yeast.</title>
        <authorList>
            <person name="Huh W.-K."/>
            <person name="Falvo J.V."/>
            <person name="Gerke L.C."/>
            <person name="Carroll A.S."/>
            <person name="Howson R.W."/>
            <person name="Weissman J.S."/>
            <person name="O'Shea E.K."/>
        </authorList>
    </citation>
    <scope>SUBCELLULAR LOCATION [LARGE SCALE ANALYSIS]</scope>
</reference>
<reference key="6">
    <citation type="journal article" date="2003" name="Nature">
        <title>Global analysis of protein expression in yeast.</title>
        <authorList>
            <person name="Ghaemmaghami S."/>
            <person name="Huh W.-K."/>
            <person name="Bower K."/>
            <person name="Howson R.W."/>
            <person name="Belle A."/>
            <person name="Dephoure N."/>
            <person name="O'Shea E.K."/>
            <person name="Weissman J.S."/>
        </authorList>
    </citation>
    <scope>LEVEL OF PROTEIN EXPRESSION [LARGE SCALE ANALYSIS]</scope>
</reference>
<reference key="7">
    <citation type="journal article" date="2010" name="Mol. Cell">
        <title>A stress-responsive system for mitochondrial protein degradation.</title>
        <authorList>
            <person name="Heo J.M."/>
            <person name="Livnat-Levanon N."/>
            <person name="Taylor E.B."/>
            <person name="Jones K.T."/>
            <person name="Dephoure N."/>
            <person name="Ring J."/>
            <person name="Xie J."/>
            <person name="Brodsky J.L."/>
            <person name="Madeo F."/>
            <person name="Gygi S.P."/>
            <person name="Ashrafi K."/>
            <person name="Glickman M.H."/>
            <person name="Rutter J."/>
        </authorList>
    </citation>
    <scope>SUBCELLULAR LOCATION</scope>
    <scope>DISRUPTION PHENOTYPE</scope>
    <scope>FUNCTION</scope>
    <scope>INTERACTION WITH CDC48 AND NPL4</scope>
</reference>
<reference key="8">
    <citation type="journal article" date="2011" name="J. Biol. Chem.">
        <title>A Cdc48p-associated factor modulates endoplasmic reticulum-associated degradation, cell stress, and ubiquitinated protein homeostasis.</title>
        <authorList>
            <person name="Tran J.R."/>
            <person name="Tomsic L.R."/>
            <person name="Brodsky J.L."/>
        </authorList>
    </citation>
    <scope>SUBCELLULAR LOCATION</scope>
    <scope>FUNCTION</scope>
    <scope>INTERACTION WITH CDC48</scope>
</reference>
<reference key="9">
    <citation type="journal article" date="2018" name="Nature">
        <title>Vms1 and ANKZF1 peptidyl-tRNA hydrolases release nascent chains from stalled ribosomes.</title>
        <authorList>
            <person name="Verma R."/>
            <person name="Reichermeier K.M."/>
            <person name="Burroughs A.M."/>
            <person name="Oania R.S."/>
            <person name="Reitsma J.M."/>
            <person name="Aravind L."/>
            <person name="Deshaies R.J."/>
        </authorList>
    </citation>
    <scope>FUNCTION</scope>
    <scope>ACTIVE SITE</scope>
    <scope>MUTAGENESIS OF 94-ASP--ARG-102; GLN-295 AND 313-ARG-ARG-314</scope>
</reference>
<reference key="10">
    <citation type="journal article" date="2018" name="Nat. Commun.">
        <title>Vms1p is a release factor for the ribosome-associated quality control complex.</title>
        <authorList>
            <person name="Zurita Rendon O."/>
            <person name="Fredrickson E.K."/>
            <person name="Howard C.J."/>
            <person name="Van Vranken J."/>
            <person name="Fogarty S."/>
            <person name="Tolley N.D."/>
            <person name="Kalia R."/>
            <person name="Osuna B.A."/>
            <person name="Shen P.S."/>
            <person name="Hill C.P."/>
            <person name="Frost A."/>
            <person name="Rutter J."/>
        </authorList>
    </citation>
    <scope>FUNCTION</scope>
    <scope>MUTAGENESIS OF HIS-279; HIS-283; ARG-284; TYR-285; THR-286; ARG-288; GLY-292; SER-294 AND GLN-295</scope>
</reference>
<reference key="11">
    <citation type="journal article" date="2019" name="Nat. Struct. Mol. Biol.">
        <title>Mechanism for recycling tRNAs on stalled ribosomes.</title>
        <authorList>
            <person name="Yip M.C.J."/>
            <person name="Keszei A.F.A."/>
            <person name="Feng Q."/>
            <person name="Chu V."/>
            <person name="McKenna M.J."/>
            <person name="Shao S."/>
        </authorList>
    </citation>
    <scope>FUNCTION</scope>
    <scope>CATALYTIC ACTIVITY</scope>
    <scope>MUTAGENESIS OF ARG-288</scope>
</reference>
<reference evidence="17 18" key="12">
    <citation type="journal article" date="2019" name="Nature">
        <title>Structure and function of Vms1 and Arb1 in RQC and mitochondrial proteome homeostasis.</title>
        <authorList>
            <person name="Su T."/>
            <person name="Izawa T."/>
            <person name="Thoms M."/>
            <person name="Yamashita Y."/>
            <person name="Cheng J."/>
            <person name="Berninghausen O."/>
            <person name="Hartl F.U."/>
            <person name="Inada T."/>
            <person name="Neupert W."/>
            <person name="Beckmann R."/>
        </authorList>
    </citation>
    <scope>STRUCTURE BY ELECTRON MICROSCOPY (3.40 ANGSTROMS) OF 13-529 IN COMPLEX WITH 60S RIBOSOME</scope>
    <scope>FUNCTION</scope>
    <scope>CATALYTIC ACTIVITY</scope>
    <scope>ACTIVE SITE</scope>
    <scope>MUTAGENESIS OF TYR-285 AND GLN-295</scope>
</reference>
<keyword id="KW-0002">3D-structure</keyword>
<keyword id="KW-0040">ANK repeat</keyword>
<keyword id="KW-0175">Coiled coil</keyword>
<keyword id="KW-0963">Cytoplasm</keyword>
<keyword id="KW-0255">Endonuclease</keyword>
<keyword id="KW-0256">Endoplasmic reticulum</keyword>
<keyword id="KW-0378">Hydrolase</keyword>
<keyword id="KW-0472">Membrane</keyword>
<keyword id="KW-0479">Metal-binding</keyword>
<keyword id="KW-0496">Mitochondrion</keyword>
<keyword id="KW-0540">Nuclease</keyword>
<keyword id="KW-1185">Reference proteome</keyword>
<keyword id="KW-0677">Repeat</keyword>
<keyword id="KW-0862">Zinc</keyword>
<keyword id="KW-0863">Zinc-finger</keyword>
<organism>
    <name type="scientific">Saccharomyces cerevisiae (strain ATCC 204508 / S288c)</name>
    <name type="common">Baker's yeast</name>
    <dbReference type="NCBI Taxonomy" id="559292"/>
    <lineage>
        <taxon>Eukaryota</taxon>
        <taxon>Fungi</taxon>
        <taxon>Dikarya</taxon>
        <taxon>Ascomycota</taxon>
        <taxon>Saccharomycotina</taxon>
        <taxon>Saccharomycetes</taxon>
        <taxon>Saccharomycetales</taxon>
        <taxon>Saccharomycetaceae</taxon>
        <taxon>Saccharomyces</taxon>
    </lineage>
</organism>
<name>VMS1_YEAST</name>
<accession>Q04311</accession>
<accession>D6VS36</accession>
<accession>Q66RH0</accession>
<gene>
    <name evidence="12 16" type="primary">VMS1</name>
    <name type="ordered locus">YDR049W</name>
</gene>
<evidence type="ECO:0000255" key="1"/>
<evidence type="ECO:0000255" key="2">
    <source>
        <dbReference type="PROSITE-ProRule" id="PRU01389"/>
    </source>
</evidence>
<evidence type="ECO:0000256" key="3">
    <source>
        <dbReference type="SAM" id="MobiDB-lite"/>
    </source>
</evidence>
<evidence type="ECO:0000269" key="4">
    <source>
    </source>
</evidence>
<evidence type="ECO:0000269" key="5">
    <source>
    </source>
</evidence>
<evidence type="ECO:0000269" key="6">
    <source>
    </source>
</evidence>
<evidence type="ECO:0000269" key="7">
    <source>
    </source>
</evidence>
<evidence type="ECO:0000269" key="8">
    <source>
    </source>
</evidence>
<evidence type="ECO:0000269" key="9">
    <source>
    </source>
</evidence>
<evidence type="ECO:0000269" key="10">
    <source>
    </source>
</evidence>
<evidence type="ECO:0000269" key="11">
    <source>
    </source>
</evidence>
<evidence type="ECO:0000303" key="12">
    <source>
    </source>
</evidence>
<evidence type="ECO:0000305" key="13"/>
<evidence type="ECO:0000305" key="14">
    <source>
    </source>
</evidence>
<evidence type="ECO:0000305" key="15">
    <source>
    </source>
</evidence>
<evidence type="ECO:0000312" key="16">
    <source>
        <dbReference type="SGD" id="S000002456"/>
    </source>
</evidence>
<evidence type="ECO:0007744" key="17">
    <source>
        <dbReference type="PDB" id="6R86"/>
    </source>
</evidence>
<evidence type="ECO:0007744" key="18">
    <source>
        <dbReference type="PDB" id="6R87"/>
    </source>
</evidence>
<evidence type="ECO:0007829" key="19">
    <source>
        <dbReference type="PDB" id="5WHG"/>
    </source>
</evidence>
<sequence length="632" mass="72733">MNSQKASKMTGSLKKNDLYIFDLSEQLLNSLKLMSFDSTLREVEVEKTSDNDRNKESGDLQIARKKVTSNVMRCSVCQMSFDSRNEQKAHYQTDYHLMNVKRNLRGLDILSVEEFDALISKEHGIKSEDENSGGEQTSSDHEESEEASDRDPDLQTNNYMETIIENDLQKLGFQKDESDAISHINTQSPYIYFKSKYLQKNEVLAIYKSLFNKRSLSNPNEALTFWNSQENPMAISALFMVGGGHFAGAIVSHQRLNVKGNAHKKDETLIEQAVNFLEHKTFHRYTTRRKQGGSQSAMDNAKGKANSAGSALRRYNESALKTDIQGVLKDWEPYLSKCDNIFIRARNVSDKKIFTDNTVLNKGDERIKSFPFTTNRPTVLELKKAWCELSYLKILPKPEPLAVKETVQKLEVSNKKDEFKEKQEPLLEEIQTEEIISLLKKGRAPLLISFLKKNKLDGNFRLKPESKYSLTPTMLHYASQQGMKQMALILLSNIKCDPTIKNRLGRTAWDLNRNDDVRHAFQIARYNLGESFTNWDETHIGQPLSREQVDEINEKKKAIENEKAEKLIKLELEAAKEKQRFAKDAERGPGKKLTNIPSIQQQNLNSLTDEQRRRLMREQRARAAEERMKKKY</sequence>
<comment type="function">
    <text evidence="6 7 8 9 10 11">Endonuclease that cleaves polypeptidyl-tRNAs downstream of the ribosome-associated quality control (RQC) pathway to release incompletely synthesized polypeptides for degradation (PubMed:21148305, PubMed:29632312, PubMed:29875445, PubMed:31011209, PubMed:31189955). The RQC pathway disassembles aberrantly stalled translation complexes to recycle or degrade the constituent parts (PubMed:29632312, PubMed:29875445, PubMed:31011209, PubMed:31189955). VMS1 acts downstream disassembly of stalled ribosomes and specifically cleaves off the terminal 3'-CCA nucleotides universal to all tRNAs from polypeptidyl-tRNAs, releasing (1) ubiquitinated polypeptides from 60S ribosomal subunit for degradation by the ERAD pathway and (2) cleaved tRNAs for recycling (PubMed:29632312, PubMed:31011209, PubMed:31189955). Component of an evolutionarily conserved system for ubiquitin-mediated mitochondria-associated protein degradation (MAD), which is necessary to maintain mitochondrial, cellular, and organismal viability (PubMed:21070972).</text>
</comment>
<comment type="subunit">
    <text evidence="6 7 8">Associates with 60S ribosomal subunit (PubMed:29632312). Interacts with CDC48 (PubMed:21070972, PubMed:21148305). Interacts with NPL4 (PubMed:21070972).</text>
</comment>
<comment type="interaction">
    <interactant intactId="EBI-784329">
        <id>Q04311</id>
    </interactant>
    <interactant intactId="EBI-4308">
        <id>P25694</id>
        <label>CDC48</label>
    </interactant>
    <organismsDiffer>false</organismsDiffer>
    <experiments>6</experiments>
</comment>
<comment type="subcellular location">
    <subcellularLocation>
        <location evidence="4 6">Cytoplasm</location>
    </subcellularLocation>
    <subcellularLocation>
        <location evidence="6">Mitochondrion</location>
    </subcellularLocation>
    <subcellularLocation>
        <location evidence="7">Endoplasmic reticulum membrane</location>
        <topology>Peripheral membrane protein</topology>
    </subcellularLocation>
    <text evidence="6">translocates from the cytosol to mitochondria upon mitochondrial stress.</text>
</comment>
<comment type="domain">
    <text evidence="2 11">The VLRF1 domain mediates binding to the 60S ribosomal subunit.</text>
</comment>
<comment type="disruption phenotype">
    <text evidence="6">Leads to progressive mitochondrial failure, hypersensitivity to oxidative stress, and decreased chronological life span.</text>
</comment>
<comment type="miscellaneous">
    <text evidence="5">Present with 3930 molecules/cell in log phase SD medium.</text>
</comment>
<comment type="similarity">
    <text evidence="2 13">Belongs to the ANKZF1/VMS1 family.</text>
</comment>
<comment type="caution">
    <text evidence="8 11">Was initially thought to act as an atypical peptidyl-tRNA hydrolase (PubMed:29632312). However, it was later shown to act as a nuclease that cleaves off the terminal 3'-CCA nucleotides from the tRNA part of polypeptidyl-tRNAs (PubMed:31189955).</text>
</comment>
<protein>
    <recommendedName>
        <fullName evidence="13">tRNA endonuclease VMS1</fullName>
        <ecNumber evidence="10 11">3.1.-.-</ecNumber>
    </recommendedName>
    <alternativeName>
        <fullName>VCP/CDC48-associated mitochondrial stress-responsive protein 1</fullName>
    </alternativeName>
</protein>
<dbReference type="EC" id="3.1.-.-" evidence="10 11"/>
<dbReference type="EMBL" id="Z49209">
    <property type="protein sequence ID" value="CAA89079.1"/>
    <property type="molecule type" value="Genomic_DNA"/>
</dbReference>
<dbReference type="EMBL" id="AY723770">
    <property type="protein sequence ID" value="AAU09687.1"/>
    <property type="molecule type" value="Genomic_DNA"/>
</dbReference>
<dbReference type="EMBL" id="BK006938">
    <property type="protein sequence ID" value="DAA11896.1"/>
    <property type="molecule type" value="Genomic_DNA"/>
</dbReference>
<dbReference type="PIR" id="S54034">
    <property type="entry name" value="S54034"/>
</dbReference>
<dbReference type="RefSeq" id="NP_010334.1">
    <property type="nucleotide sequence ID" value="NM_001180357.1"/>
</dbReference>
<dbReference type="PDB" id="5WHG">
    <property type="method" value="X-ray"/>
    <property type="resolution" value="2.70 A"/>
    <property type="chains" value="A=1-417"/>
</dbReference>
<dbReference type="PDB" id="6R86">
    <property type="method" value="EM"/>
    <property type="resolution" value="3.40 A"/>
    <property type="chains" value="R=13-529"/>
</dbReference>
<dbReference type="PDB" id="6R87">
    <property type="method" value="EM"/>
    <property type="resolution" value="3.40 A"/>
    <property type="chains" value="R=13-529"/>
</dbReference>
<dbReference type="PDBsum" id="5WHG"/>
<dbReference type="PDBsum" id="6R86"/>
<dbReference type="PDBsum" id="6R87"/>
<dbReference type="EMDB" id="EMD-4751"/>
<dbReference type="EMDB" id="EMD-4752"/>
<dbReference type="EMDB" id="EMD-4753"/>
<dbReference type="SMR" id="Q04311"/>
<dbReference type="BioGRID" id="32103">
    <property type="interactions" value="629"/>
</dbReference>
<dbReference type="ComplexPortal" id="CPX-3069">
    <property type="entry name" value="CDC48-NPL4-VMS1 AAA ATPase complex"/>
</dbReference>
<dbReference type="DIP" id="DIP-6303N"/>
<dbReference type="FunCoup" id="Q04311">
    <property type="interactions" value="226"/>
</dbReference>
<dbReference type="IntAct" id="Q04311">
    <property type="interactions" value="6"/>
</dbReference>
<dbReference type="MINT" id="Q04311"/>
<dbReference type="STRING" id="4932.YDR049W"/>
<dbReference type="iPTMnet" id="Q04311"/>
<dbReference type="PaxDb" id="4932-YDR049W"/>
<dbReference type="PeptideAtlas" id="Q04311"/>
<dbReference type="EnsemblFungi" id="YDR049W_mRNA">
    <property type="protein sequence ID" value="YDR049W"/>
    <property type="gene ID" value="YDR049W"/>
</dbReference>
<dbReference type="GeneID" id="851618"/>
<dbReference type="KEGG" id="sce:YDR049W"/>
<dbReference type="AGR" id="SGD:S000002456"/>
<dbReference type="SGD" id="S000002456">
    <property type="gene designation" value="VMS1"/>
</dbReference>
<dbReference type="VEuPathDB" id="FungiDB:YDR049W"/>
<dbReference type="eggNOG" id="KOG2505">
    <property type="taxonomic scope" value="Eukaryota"/>
</dbReference>
<dbReference type="GeneTree" id="ENSGT00390000005911"/>
<dbReference type="HOGENOM" id="CLU_014293_1_1_1"/>
<dbReference type="InParanoid" id="Q04311"/>
<dbReference type="OMA" id="GPHIFMC"/>
<dbReference type="OrthoDB" id="429841at2759"/>
<dbReference type="BioCyc" id="YEAST:G3O-29660-MONOMER"/>
<dbReference type="BRENDA" id="3.1.1.29">
    <property type="organism ID" value="984"/>
</dbReference>
<dbReference type="BioGRID-ORCS" id="851618">
    <property type="hits" value="5 hits in 10 CRISPR screens"/>
</dbReference>
<dbReference type="PRO" id="PR:Q04311"/>
<dbReference type="Proteomes" id="UP000002311">
    <property type="component" value="Chromosome IV"/>
</dbReference>
<dbReference type="RNAct" id="Q04311">
    <property type="molecule type" value="protein"/>
</dbReference>
<dbReference type="GO" id="GO:0036266">
    <property type="term" value="C:Cdc48p-Npl4p-Vms1p AAA ATPase complex"/>
    <property type="evidence" value="ECO:0000314"/>
    <property type="project" value="SGD"/>
</dbReference>
<dbReference type="GO" id="GO:0005737">
    <property type="term" value="C:cytoplasm"/>
    <property type="evidence" value="ECO:0007005"/>
    <property type="project" value="SGD"/>
</dbReference>
<dbReference type="GO" id="GO:0005829">
    <property type="term" value="C:cytosol"/>
    <property type="evidence" value="ECO:0000314"/>
    <property type="project" value="SGD"/>
</dbReference>
<dbReference type="GO" id="GO:0005789">
    <property type="term" value="C:endoplasmic reticulum membrane"/>
    <property type="evidence" value="ECO:0000314"/>
    <property type="project" value="SGD"/>
</dbReference>
<dbReference type="GO" id="GO:0005739">
    <property type="term" value="C:mitochondrion"/>
    <property type="evidence" value="ECO:0000314"/>
    <property type="project" value="SGD"/>
</dbReference>
<dbReference type="GO" id="GO:0140101">
    <property type="term" value="F:catalytic activity, acting on a tRNA"/>
    <property type="evidence" value="ECO:0000314"/>
    <property type="project" value="UniProtKB"/>
</dbReference>
<dbReference type="GO" id="GO:0004045">
    <property type="term" value="F:peptidyl-tRNA hydrolase activity"/>
    <property type="evidence" value="ECO:0000314"/>
    <property type="project" value="SGD"/>
</dbReference>
<dbReference type="GO" id="GO:0004521">
    <property type="term" value="F:RNA endonuclease activity"/>
    <property type="evidence" value="ECO:0000314"/>
    <property type="project" value="UniProtKB"/>
</dbReference>
<dbReference type="GO" id="GO:0008270">
    <property type="term" value="F:zinc ion binding"/>
    <property type="evidence" value="ECO:0007669"/>
    <property type="project" value="UniProtKB-KW"/>
</dbReference>
<dbReference type="GO" id="GO:0036503">
    <property type="term" value="P:ERAD pathway"/>
    <property type="evidence" value="ECO:0000315"/>
    <property type="project" value="SGD"/>
</dbReference>
<dbReference type="GO" id="GO:0072671">
    <property type="term" value="P:mitochondria-associated ubiquitin-dependent protein catabolic process"/>
    <property type="evidence" value="ECO:0000315"/>
    <property type="project" value="SGD"/>
</dbReference>
<dbReference type="GO" id="GO:0071630">
    <property type="term" value="P:nuclear protein quality control by the ubiquitin-proteasome system"/>
    <property type="evidence" value="ECO:0000315"/>
    <property type="project" value="SGD"/>
</dbReference>
<dbReference type="GO" id="GO:0006515">
    <property type="term" value="P:protein quality control for misfolded or incompletely synthesized proteins"/>
    <property type="evidence" value="ECO:0000314"/>
    <property type="project" value="UniProtKB"/>
</dbReference>
<dbReference type="GO" id="GO:0072344">
    <property type="term" value="P:rescue of stalled ribosome"/>
    <property type="evidence" value="ECO:0000314"/>
    <property type="project" value="UniProtKB"/>
</dbReference>
<dbReference type="FunFam" id="1.25.40.20:FF:000290">
    <property type="entry name" value="C2H2 finger and ankyrin domain-containing protein"/>
    <property type="match status" value="1"/>
</dbReference>
<dbReference type="Gene3D" id="1.25.40.20">
    <property type="entry name" value="Ankyrin repeat-containing domain"/>
    <property type="match status" value="1"/>
</dbReference>
<dbReference type="InterPro" id="IPR036770">
    <property type="entry name" value="Ankyrin_rpt-contain_sf"/>
</dbReference>
<dbReference type="InterPro" id="IPR047139">
    <property type="entry name" value="ANKZ1/VMS1"/>
</dbReference>
<dbReference type="InterPro" id="IPR041175">
    <property type="entry name" value="VLRF1/Vms1"/>
</dbReference>
<dbReference type="InterPro" id="IPR013087">
    <property type="entry name" value="Znf_C2H2_type"/>
</dbReference>
<dbReference type="PANTHER" id="PTHR16036">
    <property type="entry name" value="ANKYRIN REPEAT AND ZINC FINGER DOMAIN-CONTAINING PROTEIN 1"/>
    <property type="match status" value="1"/>
</dbReference>
<dbReference type="PANTHER" id="PTHR16036:SF2">
    <property type="entry name" value="TRNA ENDONUCLEASE ANKZF1"/>
    <property type="match status" value="1"/>
</dbReference>
<dbReference type="Pfam" id="PF18826">
    <property type="entry name" value="bVLRF1"/>
    <property type="match status" value="1"/>
</dbReference>
<dbReference type="SUPFAM" id="SSF48403">
    <property type="entry name" value="Ankyrin repeat"/>
    <property type="match status" value="1"/>
</dbReference>
<dbReference type="PROSITE" id="PS52044">
    <property type="entry name" value="VLRF1"/>
    <property type="match status" value="1"/>
</dbReference>
<dbReference type="PROSITE" id="PS00028">
    <property type="entry name" value="ZINC_FINGER_C2H2_1"/>
    <property type="match status" value="1"/>
</dbReference>
<proteinExistence type="evidence at protein level"/>